<keyword id="KW-0878">Amphibian defense peptide</keyword>
<keyword id="KW-0044">Antibiotic</keyword>
<keyword id="KW-0929">Antimicrobial</keyword>
<keyword id="KW-0903">Direct protein sequencing</keyword>
<keyword id="KW-1015">Disulfide bond</keyword>
<keyword id="KW-0295">Fungicide</keyword>
<keyword id="KW-0964">Secreted</keyword>
<proteinExistence type="evidence at protein level"/>
<feature type="peptide" id="PRO_0000043560" description="Ranatuerin-1" evidence="1">
    <location>
        <begin position="1"/>
        <end position="25"/>
    </location>
</feature>
<feature type="disulfide bond" evidence="4">
    <location>
        <begin position="19"/>
        <end position="25"/>
    </location>
</feature>
<accession>P82741</accession>
<dbReference type="GO" id="GO:0005576">
    <property type="term" value="C:extracellular region"/>
    <property type="evidence" value="ECO:0007669"/>
    <property type="project" value="UniProtKB-SubCell"/>
</dbReference>
<dbReference type="GO" id="GO:0042742">
    <property type="term" value="P:defense response to bacterium"/>
    <property type="evidence" value="ECO:0007669"/>
    <property type="project" value="UniProtKB-KW"/>
</dbReference>
<dbReference type="GO" id="GO:0050832">
    <property type="term" value="P:defense response to fungus"/>
    <property type="evidence" value="ECO:0007669"/>
    <property type="project" value="UniProtKB-KW"/>
</dbReference>
<dbReference type="GO" id="GO:0031640">
    <property type="term" value="P:killing of cells of another organism"/>
    <property type="evidence" value="ECO:0007669"/>
    <property type="project" value="UniProtKB-KW"/>
</dbReference>
<dbReference type="InterPro" id="IPR012521">
    <property type="entry name" value="Antimicrobial_frog_2"/>
</dbReference>
<dbReference type="Pfam" id="PF08023">
    <property type="entry name" value="Antimicrobial_2"/>
    <property type="match status" value="1"/>
</dbReference>
<name>RN2X1_AQUCT</name>
<comment type="function">
    <text evidence="1">Antibacterial activity against Gram-positive bacterium S.aureus (MIC=50 uM) and Gram-negative bacterium E.coli (MIC=2 uM). Has activity against C.albicans (MIC=70 uM). Shows no detectable hemolytic activity towards human erythrocytes.</text>
</comment>
<comment type="subcellular location">
    <subcellularLocation>
        <location evidence="1">Secreted</location>
    </subcellularLocation>
</comment>
<comment type="tissue specificity">
    <text evidence="4">Expressed by the skin glands.</text>
</comment>
<comment type="similarity">
    <text evidence="3">Belongs to the frog skin active peptide (FSAP) family. Ranatuerin subfamily.</text>
</comment>
<protein>
    <recommendedName>
        <fullName evidence="2">Ranatuerin-1</fullName>
    </recommendedName>
</protein>
<organism>
    <name type="scientific">Aquarana catesbeiana</name>
    <name type="common">American bullfrog</name>
    <name type="synonym">Rana catesbeiana</name>
    <dbReference type="NCBI Taxonomy" id="8400"/>
    <lineage>
        <taxon>Eukaryota</taxon>
        <taxon>Metazoa</taxon>
        <taxon>Chordata</taxon>
        <taxon>Craniata</taxon>
        <taxon>Vertebrata</taxon>
        <taxon>Euteleostomi</taxon>
        <taxon>Amphibia</taxon>
        <taxon>Batrachia</taxon>
        <taxon>Anura</taxon>
        <taxon>Neobatrachia</taxon>
        <taxon>Ranoidea</taxon>
        <taxon>Ranidae</taxon>
        <taxon>Aquarana</taxon>
    </lineage>
</organism>
<reference key="1">
    <citation type="journal article" date="1998" name="Biochem. Biophys. Res. Commun.">
        <title>Ranatuerins: antimicrobial peptides isolated from the skin of the American bullfrog, Rana catesbeiana.</title>
        <authorList>
            <person name="Goraya J."/>
            <person name="Knoop F.C."/>
            <person name="Conlon J.M."/>
        </authorList>
    </citation>
    <scope>PROTEIN SEQUENCE</scope>
    <scope>FUNCTION</scope>
    <scope>SUBCELLULAR LOCATION</scope>
    <source>
        <tissue>Skin secretion</tissue>
    </source>
</reference>
<sequence length="25" mass="2651">SMLSVLKNLGKVGLGFVACKINKQC</sequence>
<evidence type="ECO:0000269" key="1">
    <source>
    </source>
</evidence>
<evidence type="ECO:0000303" key="2">
    <source>
    </source>
</evidence>
<evidence type="ECO:0000305" key="3"/>
<evidence type="ECO:0000305" key="4">
    <source>
    </source>
</evidence>